<evidence type="ECO:0000269" key="1">
    <source>
    </source>
</evidence>
<evidence type="ECO:0000269" key="2">
    <source>
    </source>
</evidence>
<evidence type="ECO:0000269" key="3">
    <source>
    </source>
</evidence>
<evidence type="ECO:0000269" key="4">
    <source>
    </source>
</evidence>
<evidence type="ECO:0000303" key="5">
    <source>
    </source>
</evidence>
<evidence type="ECO:0000305" key="6"/>
<gene>
    <name type="primary">mazF</name>
    <name type="ordered locus">NWMN_1974</name>
</gene>
<sequence length="120" mass="13442">MIRRGDVYLADLSPVQGSEQGGVRPVVIIQNDTGNKYSPTVIVAAITGRINKAKIPTHVEIEKKKYKLDKDSVILLEQIRTLDKKRLKEKLTYLSDDKMKEVDNALMISLGLNAVAHQKN</sequence>
<name>MAZF_STAAE</name>
<dbReference type="EC" id="3.1.-.-"/>
<dbReference type="EMBL" id="AP009351">
    <property type="protein sequence ID" value="BAF68246.1"/>
    <property type="molecule type" value="Genomic_DNA"/>
</dbReference>
<dbReference type="RefSeq" id="WP_000621175.1">
    <property type="nucleotide sequence ID" value="NZ_JBBIAE010000008.1"/>
</dbReference>
<dbReference type="BMRB" id="A6QIR4"/>
<dbReference type="SMR" id="A6QIR4"/>
<dbReference type="IntAct" id="A6QIR4">
    <property type="interactions" value="1"/>
</dbReference>
<dbReference type="KEGG" id="sae:NWMN_1974"/>
<dbReference type="HOGENOM" id="CLU_121823_1_0_9"/>
<dbReference type="PHI-base" id="PHI:9882"/>
<dbReference type="Proteomes" id="UP000006386">
    <property type="component" value="Chromosome"/>
</dbReference>
<dbReference type="GO" id="GO:0003677">
    <property type="term" value="F:DNA binding"/>
    <property type="evidence" value="ECO:0007669"/>
    <property type="project" value="InterPro"/>
</dbReference>
<dbReference type="GO" id="GO:0003723">
    <property type="term" value="F:RNA binding"/>
    <property type="evidence" value="ECO:0007669"/>
    <property type="project" value="UniProtKB-KW"/>
</dbReference>
<dbReference type="GO" id="GO:0004521">
    <property type="term" value="F:RNA endonuclease activity"/>
    <property type="evidence" value="ECO:0007669"/>
    <property type="project" value="TreeGrafter"/>
</dbReference>
<dbReference type="GO" id="GO:0006402">
    <property type="term" value="P:mRNA catabolic process"/>
    <property type="evidence" value="ECO:0007669"/>
    <property type="project" value="TreeGrafter"/>
</dbReference>
<dbReference type="GO" id="GO:0016075">
    <property type="term" value="P:rRNA catabolic process"/>
    <property type="evidence" value="ECO:0007669"/>
    <property type="project" value="TreeGrafter"/>
</dbReference>
<dbReference type="Gene3D" id="2.30.30.110">
    <property type="match status" value="1"/>
</dbReference>
<dbReference type="InterPro" id="IPR003477">
    <property type="entry name" value="PemK-like"/>
</dbReference>
<dbReference type="InterPro" id="IPR011067">
    <property type="entry name" value="Plasmid_toxin/cell-grow_inhib"/>
</dbReference>
<dbReference type="PANTHER" id="PTHR33988:SF2">
    <property type="entry name" value="ENDORIBONUCLEASE MAZF"/>
    <property type="match status" value="1"/>
</dbReference>
<dbReference type="PANTHER" id="PTHR33988">
    <property type="entry name" value="ENDORIBONUCLEASE MAZF-RELATED"/>
    <property type="match status" value="1"/>
</dbReference>
<dbReference type="Pfam" id="PF02452">
    <property type="entry name" value="PemK_toxin"/>
    <property type="match status" value="1"/>
</dbReference>
<dbReference type="PIRSF" id="PIRSF033490">
    <property type="entry name" value="MazF"/>
    <property type="match status" value="1"/>
</dbReference>
<dbReference type="SUPFAM" id="SSF50118">
    <property type="entry name" value="Cell growth inhibitor/plasmid maintenance toxic component"/>
    <property type="match status" value="1"/>
</dbReference>
<reference key="1">
    <citation type="journal article" date="2008" name="J. Bacteriol.">
        <title>Genome sequence of Staphylococcus aureus strain Newman and comparative analysis of staphylococcal genomes: polymorphism and evolution of two major pathogenicity islands.</title>
        <authorList>
            <person name="Baba T."/>
            <person name="Bae T."/>
            <person name="Schneewind O."/>
            <person name="Takeuchi F."/>
            <person name="Hiramatsu K."/>
        </authorList>
    </citation>
    <scope>NUCLEOTIDE SEQUENCE [LARGE SCALE GENOMIC DNA]</scope>
    <source>
        <strain>Newman</strain>
    </source>
</reference>
<reference key="2">
    <citation type="journal article" date="2007" name="J. Bacteriol.">
        <title>Characterization of mazFSa, an endoribonuclease from Staphylococcus aureus.</title>
        <authorList>
            <person name="Fu Z."/>
            <person name="Donegan N.P."/>
            <person name="Memmi G."/>
            <person name="Cheung A.L."/>
        </authorList>
    </citation>
    <scope>FUNCTION AS AN ENDORIBONUCLEASE</scope>
    <scope>INDUCTION</scope>
    <scope>SUBUNIT</scope>
    <source>
        <strain>Newman</strain>
    </source>
</reference>
<reference key="3">
    <citation type="journal article" date="2009" name="J. Bacteriol.">
        <title>Overexpression of MazFsa in Staphylococcus aureus induces bacteriostasis by selectively targeting mRNAs for cleavage.</title>
        <authorList>
            <person name="Fu Z."/>
            <person name="Tamber S."/>
            <person name="Memmi G."/>
            <person name="Donegan N.P."/>
            <person name="Cheung A.L."/>
        </authorList>
    </citation>
    <scope>FUNCTION</scope>
    <source>
        <strain>Newman</strain>
    </source>
</reference>
<reference key="4">
    <citation type="journal article" date="2009" name="J. Bacteriol.">
        <title>Staphylococcus aureus MazF specifically cleaves a pentad sequence, UACAU, which is unusually abundant in the mRNA for pathogenic adhesive factor SraP.</title>
        <authorList>
            <person name="Zhu L."/>
            <person name="Inoue K."/>
            <person name="Yoshizumi S."/>
            <person name="Kobayashi H."/>
            <person name="Zhang Y."/>
            <person name="Ouyang M."/>
            <person name="Kato F."/>
            <person name="Sugai M."/>
            <person name="Inouye M."/>
        </authorList>
    </citation>
    <scope>FUNCTION</scope>
    <scope>SUBSTRATE SPECIFICITY</scope>
</reference>
<reference key="5">
    <citation type="journal article" date="2013" name="Anal. Biochem.">
        <title>Detection of endogenous MazF enzymatic activity in Staphylococcus aureus.</title>
        <authorList>
            <person name="van Rensburg J.J."/>
            <person name="Hergenrother P.J."/>
        </authorList>
    </citation>
    <scope>FUNCTION</scope>
    <source>
        <strain>NRS26</strain>
    </source>
</reference>
<accession>A6QIR4</accession>
<keyword id="KW-0255">Endonuclease</keyword>
<keyword id="KW-0378">Hydrolase</keyword>
<keyword id="KW-0540">Nuclease</keyword>
<keyword id="KW-0694">RNA-binding</keyword>
<keyword id="KW-1277">Toxin-antitoxin system</keyword>
<organism>
    <name type="scientific">Staphylococcus aureus (strain Newman)</name>
    <dbReference type="NCBI Taxonomy" id="426430"/>
    <lineage>
        <taxon>Bacteria</taxon>
        <taxon>Bacillati</taxon>
        <taxon>Bacillota</taxon>
        <taxon>Bacilli</taxon>
        <taxon>Bacillales</taxon>
        <taxon>Staphylococcaceae</taxon>
        <taxon>Staphylococcus</taxon>
    </lineage>
</organism>
<feature type="chain" id="PRO_0000330703" description="Endoribonuclease MazF">
    <location>
        <begin position="1"/>
        <end position="120"/>
    </location>
</feature>
<proteinExistence type="evidence at protein level"/>
<protein>
    <recommendedName>
        <fullName>Endoribonuclease MazF</fullName>
        <ecNumber>3.1.-.-</ecNumber>
    </recommendedName>
    <alternativeName>
        <fullName evidence="5">MazFSa</fullName>
    </alternativeName>
    <alternativeName>
        <fullName>Toxin MazF</fullName>
    </alternativeName>
    <alternativeName>
        <fullName>mRNA interferase MazF</fullName>
    </alternativeName>
</protein>
<comment type="function">
    <text evidence="1 2 3 4">Toxic component of a type II toxin-antitoxin (TA) system. A sequence-specific endoribonuclease, it cuts between the first and second nucleotides of 5'-UACAU-3' (PubMed:19251861, PubMed:23994560). Cleaves the artificial ssDNA-RNA substrate 5'-AAGTCrUrACATCAG-3' between rU and rA in vitro (PubMed:23994560). Originally found to be a ribosome-independent, with a consensus sequence of 5'-[ACG]UU[ACG]-3' in single-stranded RNA (PubMed:17933891, PubMed:19168622). Its overexpression inhibits protein synthesis and induces bacterial stasis, it is neutralized by coexpression with cognate antitoxin MazE (PubMed:17933891, PubMed:19168622, PubMed:19251861). Not all mRNAs are equally susceptible in vivo (gyrB, recA and sarA for example are not degraded), while no degradation of rRNA has been seen (PubMed:19168622).</text>
</comment>
<comment type="subunit">
    <text evidence="1">Forms a complex with MazE which is no longer active as an endoribonuclease.</text>
</comment>
<comment type="interaction">
    <interactant intactId="EBI-6469950">
        <id>A6QIR4</id>
    </interactant>
    <interactant intactId="EBI-6469965">
        <id>P0C7B4</id>
        <label>mazE</label>
    </interactant>
    <organismsDiffer>false</organismsDiffer>
    <experiments>2</experiments>
</comment>
<comment type="induction">
    <text evidence="1">By heat shock and by exposure to sub-MIC concentrations of several antimicrobial agents such as doxycycline, erythromycin and penicillin.</text>
</comment>
<comment type="miscellaneous">
    <text evidence="1">The cleavage efficiency was significantly reduced if the first or fourth residues of the consensus region were changed to U. Alterations in any of the two U residues in the center of the consensus sequence completely abolished the cleavage by MazF.</text>
</comment>
<comment type="similarity">
    <text evidence="6">Belongs to the PemK/MazF family.</text>
</comment>